<reference key="1">
    <citation type="journal article" date="2005" name="PLoS Biol.">
        <title>The genomes of Oryza sativa: a history of duplications.</title>
        <authorList>
            <person name="Yu J."/>
            <person name="Wang J."/>
            <person name="Lin W."/>
            <person name="Li S."/>
            <person name="Li H."/>
            <person name="Zhou J."/>
            <person name="Ni P."/>
            <person name="Dong W."/>
            <person name="Hu S."/>
            <person name="Zeng C."/>
            <person name="Zhang J."/>
            <person name="Zhang Y."/>
            <person name="Li R."/>
            <person name="Xu Z."/>
            <person name="Li S."/>
            <person name="Li X."/>
            <person name="Zheng H."/>
            <person name="Cong L."/>
            <person name="Lin L."/>
            <person name="Yin J."/>
            <person name="Geng J."/>
            <person name="Li G."/>
            <person name="Shi J."/>
            <person name="Liu J."/>
            <person name="Lv H."/>
            <person name="Li J."/>
            <person name="Wang J."/>
            <person name="Deng Y."/>
            <person name="Ran L."/>
            <person name="Shi X."/>
            <person name="Wang X."/>
            <person name="Wu Q."/>
            <person name="Li C."/>
            <person name="Ren X."/>
            <person name="Wang J."/>
            <person name="Wang X."/>
            <person name="Li D."/>
            <person name="Liu D."/>
            <person name="Zhang X."/>
            <person name="Ji Z."/>
            <person name="Zhao W."/>
            <person name="Sun Y."/>
            <person name="Zhang Z."/>
            <person name="Bao J."/>
            <person name="Han Y."/>
            <person name="Dong L."/>
            <person name="Ji J."/>
            <person name="Chen P."/>
            <person name="Wu S."/>
            <person name="Liu J."/>
            <person name="Xiao Y."/>
            <person name="Bu D."/>
            <person name="Tan J."/>
            <person name="Yang L."/>
            <person name="Ye C."/>
            <person name="Zhang J."/>
            <person name="Xu J."/>
            <person name="Zhou Y."/>
            <person name="Yu Y."/>
            <person name="Zhang B."/>
            <person name="Zhuang S."/>
            <person name="Wei H."/>
            <person name="Liu B."/>
            <person name="Lei M."/>
            <person name="Yu H."/>
            <person name="Li Y."/>
            <person name="Xu H."/>
            <person name="Wei S."/>
            <person name="He X."/>
            <person name="Fang L."/>
            <person name="Zhang Z."/>
            <person name="Zhang Y."/>
            <person name="Huang X."/>
            <person name="Su Z."/>
            <person name="Tong W."/>
            <person name="Li J."/>
            <person name="Tong Z."/>
            <person name="Li S."/>
            <person name="Ye J."/>
            <person name="Wang L."/>
            <person name="Fang L."/>
            <person name="Lei T."/>
            <person name="Chen C.-S."/>
            <person name="Chen H.-C."/>
            <person name="Xu Z."/>
            <person name="Li H."/>
            <person name="Huang H."/>
            <person name="Zhang F."/>
            <person name="Xu H."/>
            <person name="Li N."/>
            <person name="Zhao C."/>
            <person name="Li S."/>
            <person name="Dong L."/>
            <person name="Huang Y."/>
            <person name="Li L."/>
            <person name="Xi Y."/>
            <person name="Qi Q."/>
            <person name="Li W."/>
            <person name="Zhang B."/>
            <person name="Hu W."/>
            <person name="Zhang Y."/>
            <person name="Tian X."/>
            <person name="Jiao Y."/>
            <person name="Liang X."/>
            <person name="Jin J."/>
            <person name="Gao L."/>
            <person name="Zheng W."/>
            <person name="Hao B."/>
            <person name="Liu S.-M."/>
            <person name="Wang W."/>
            <person name="Yuan L."/>
            <person name="Cao M."/>
            <person name="McDermott J."/>
            <person name="Samudrala R."/>
            <person name="Wang J."/>
            <person name="Wong G.K.-S."/>
            <person name="Yang H."/>
        </authorList>
    </citation>
    <scope>NUCLEOTIDE SEQUENCE [LARGE SCALE GENOMIC DNA]</scope>
    <source>
        <strain>cv. 93-11</strain>
    </source>
</reference>
<reference key="2">
    <citation type="journal article" date="2004" name="Trends Plant Sci.">
        <title>Plant actin-related proteins.</title>
        <authorList>
            <person name="Kandasamy M.K."/>
            <person name="Deal R.B."/>
            <person name="McKinney E.C."/>
            <person name="Meagher R.B."/>
        </authorList>
    </citation>
    <scope>REVIEW</scope>
    <scope>GENE FAMILY</scope>
    <scope>NOMENCLATURE</scope>
</reference>
<gene>
    <name type="primary">ARP9</name>
    <name type="ORF">OsI_014463</name>
</gene>
<sequence length="586" mass="65960">MDYLKTVVPSQLMAERGANLVVINPGSSNVRIGFASQDVPFNIPHCIARHITQRKDDTPRLSVRDKMLNCHATPSQNAERERAYDIIASLLKIPFLDEEMPSANQALPPKMGRVDALSSQQNKDDSKFTWTDVMDRSIKSSTPIVDKDADVDPLQRSTPDDTEPNSEENMYKEIIFGEDALKIPPSESYCLSHPIRRGHFNISQDYSLHQVLEDLRTIWNWILTEKLHINPRDRHLYSAILVLGETFDNREIKEMLSIVLCDLGFSTAVIHQEALAAAFGNGLSTSCVVNIGAQVTQVVCVEDGVALPHTALALPYGGDDISRCLLWVQRRHRTWPNFQTDPVNRPIDMLMLNKLKESYSQIRSGSFDAVSVVHSYEHEKSVGHQKTKLSALNVPPMGLLYPRVLVPEEYPPPPRSWFQDYDDMLEDTWQTSDSLYSSGNGGFGMWDNYPMFPTRLKKFDNIGLVEAIVSSILSTGRIELQRKLFCSIQLVGGTASTAGLAPVLEQRVLNTIPSNQPIEKAEVLQSRSYPLFVPWKGGVILGVLDIGRDAWIHREDWAKNGVHIGSGRKYRDSYFLQAQAMCYYNS</sequence>
<dbReference type="EMBL" id="CM000129">
    <property type="status" value="NOT_ANNOTATED_CDS"/>
    <property type="molecule type" value="Genomic_DNA"/>
</dbReference>
<dbReference type="SMR" id="A2XQX0"/>
<dbReference type="STRING" id="39946.A2XQX0"/>
<dbReference type="Proteomes" id="UP000007015">
    <property type="component" value="Chromosome 4"/>
</dbReference>
<dbReference type="CDD" id="cd10206">
    <property type="entry name" value="ASKHA_NBD_Arp8-like"/>
    <property type="match status" value="1"/>
</dbReference>
<dbReference type="FunFam" id="3.30.420.40:FF:000286">
    <property type="entry name" value="Actin-related protein 8"/>
    <property type="match status" value="1"/>
</dbReference>
<dbReference type="FunFam" id="3.30.420.40:FF:000378">
    <property type="entry name" value="Actin-related protein 9"/>
    <property type="match status" value="1"/>
</dbReference>
<dbReference type="FunFam" id="3.30.420.40:FF:000400">
    <property type="entry name" value="Actin-related protein 9"/>
    <property type="match status" value="1"/>
</dbReference>
<dbReference type="FunFam" id="3.30.420.40:FF:000402">
    <property type="entry name" value="Actin-related protein 9"/>
    <property type="match status" value="1"/>
</dbReference>
<dbReference type="FunFam" id="3.90.640.10:FF:000044">
    <property type="entry name" value="Actin-related protein 9"/>
    <property type="match status" value="1"/>
</dbReference>
<dbReference type="Gene3D" id="3.30.420.40">
    <property type="match status" value="2"/>
</dbReference>
<dbReference type="Gene3D" id="3.90.640.10">
    <property type="entry name" value="Actin, Chain A, domain 4"/>
    <property type="match status" value="1"/>
</dbReference>
<dbReference type="InterPro" id="IPR004000">
    <property type="entry name" value="Actin"/>
</dbReference>
<dbReference type="InterPro" id="IPR043129">
    <property type="entry name" value="ATPase_NBD"/>
</dbReference>
<dbReference type="PANTHER" id="PTHR11937">
    <property type="entry name" value="ACTIN"/>
    <property type="match status" value="1"/>
</dbReference>
<dbReference type="Pfam" id="PF00022">
    <property type="entry name" value="Actin"/>
    <property type="match status" value="1"/>
</dbReference>
<dbReference type="SMART" id="SM00268">
    <property type="entry name" value="ACTIN"/>
    <property type="match status" value="1"/>
</dbReference>
<dbReference type="SUPFAM" id="SSF53067">
    <property type="entry name" value="Actin-like ATPase domain"/>
    <property type="match status" value="2"/>
</dbReference>
<name>ARP9_ORYSI</name>
<organism>
    <name type="scientific">Oryza sativa subsp. indica</name>
    <name type="common">Rice</name>
    <dbReference type="NCBI Taxonomy" id="39946"/>
    <lineage>
        <taxon>Eukaryota</taxon>
        <taxon>Viridiplantae</taxon>
        <taxon>Streptophyta</taxon>
        <taxon>Embryophyta</taxon>
        <taxon>Tracheophyta</taxon>
        <taxon>Spermatophyta</taxon>
        <taxon>Magnoliopsida</taxon>
        <taxon>Liliopsida</taxon>
        <taxon>Poales</taxon>
        <taxon>Poaceae</taxon>
        <taxon>BOP clade</taxon>
        <taxon>Oryzoideae</taxon>
        <taxon>Oryzeae</taxon>
        <taxon>Oryzinae</taxon>
        <taxon>Oryza</taxon>
        <taxon>Oryza sativa</taxon>
    </lineage>
</organism>
<accession>A2XQX0</accession>
<protein>
    <recommendedName>
        <fullName>Actin-related protein 9</fullName>
    </recommendedName>
</protein>
<comment type="similarity">
    <text evidence="2">Belongs to the actin family. ARP8 subfamily.</text>
</comment>
<evidence type="ECO:0000256" key="1">
    <source>
        <dbReference type="SAM" id="MobiDB-lite"/>
    </source>
</evidence>
<evidence type="ECO:0000305" key="2"/>
<proteinExistence type="inferred from homology"/>
<feature type="chain" id="PRO_0000320541" description="Actin-related protein 9">
    <location>
        <begin position="1"/>
        <end position="586"/>
    </location>
</feature>
<feature type="region of interest" description="Disordered" evidence="1">
    <location>
        <begin position="141"/>
        <end position="169"/>
    </location>
</feature>
<keyword id="KW-1185">Reference proteome</keyword>